<name>RNB_ECOSM</name>
<comment type="function">
    <text evidence="2">Involved in mRNA degradation. Hydrolyzes single-stranded polyribonucleotides processively in the 3' to 5' direction.</text>
</comment>
<comment type="catalytic activity">
    <reaction evidence="2">
        <text>Exonucleolytic cleavage in the 3'- to 5'-direction to yield nucleoside 5'-phosphates.</text>
        <dbReference type="EC" id="3.1.13.1"/>
    </reaction>
</comment>
<comment type="subcellular location">
    <subcellularLocation>
        <location evidence="2">Cytoplasm</location>
    </subcellularLocation>
</comment>
<comment type="similarity">
    <text evidence="2">Belongs to the RNR ribonuclease family. RNase II subfamily.</text>
</comment>
<protein>
    <recommendedName>
        <fullName evidence="2">Exoribonuclease 2</fullName>
        <ecNumber evidence="2">3.1.13.1</ecNumber>
    </recommendedName>
    <alternativeName>
        <fullName evidence="2">Exoribonuclease II</fullName>
        <shortName evidence="2">RNase II</shortName>
        <shortName evidence="2">Ribonuclease II</shortName>
    </alternativeName>
</protein>
<organism>
    <name type="scientific">Escherichia coli (strain SMS-3-5 / SECEC)</name>
    <dbReference type="NCBI Taxonomy" id="439855"/>
    <lineage>
        <taxon>Bacteria</taxon>
        <taxon>Pseudomonadati</taxon>
        <taxon>Pseudomonadota</taxon>
        <taxon>Gammaproteobacteria</taxon>
        <taxon>Enterobacterales</taxon>
        <taxon>Enterobacteriaceae</taxon>
        <taxon>Escherichia</taxon>
    </lineage>
</organism>
<keyword id="KW-0963">Cytoplasm</keyword>
<keyword id="KW-0269">Exonuclease</keyword>
<keyword id="KW-0378">Hydrolase</keyword>
<keyword id="KW-0540">Nuclease</keyword>
<keyword id="KW-0694">RNA-binding</keyword>
<gene>
    <name evidence="2" type="primary">rnb</name>
    <name type="ordered locus">EcSMS35_1841</name>
</gene>
<evidence type="ECO:0000255" key="1"/>
<evidence type="ECO:0000255" key="2">
    <source>
        <dbReference type="HAMAP-Rule" id="MF_01036"/>
    </source>
</evidence>
<dbReference type="EC" id="3.1.13.1" evidence="2"/>
<dbReference type="EMBL" id="CP000970">
    <property type="protein sequence ID" value="ACB17629.1"/>
    <property type="molecule type" value="Genomic_DNA"/>
</dbReference>
<dbReference type="RefSeq" id="WP_000484983.1">
    <property type="nucleotide sequence ID" value="NC_010498.1"/>
</dbReference>
<dbReference type="SMR" id="B1LGE7"/>
<dbReference type="KEGG" id="ecm:EcSMS35_1841"/>
<dbReference type="HOGENOM" id="CLU_002333_7_3_6"/>
<dbReference type="Proteomes" id="UP000007011">
    <property type="component" value="Chromosome"/>
</dbReference>
<dbReference type="GO" id="GO:0005829">
    <property type="term" value="C:cytosol"/>
    <property type="evidence" value="ECO:0007669"/>
    <property type="project" value="TreeGrafter"/>
</dbReference>
<dbReference type="GO" id="GO:0008859">
    <property type="term" value="F:exoribonuclease II activity"/>
    <property type="evidence" value="ECO:0007669"/>
    <property type="project" value="UniProtKB-UniRule"/>
</dbReference>
<dbReference type="GO" id="GO:0003723">
    <property type="term" value="F:RNA binding"/>
    <property type="evidence" value="ECO:0007669"/>
    <property type="project" value="UniProtKB-KW"/>
</dbReference>
<dbReference type="GO" id="GO:0006402">
    <property type="term" value="P:mRNA catabolic process"/>
    <property type="evidence" value="ECO:0007669"/>
    <property type="project" value="UniProtKB-UniRule"/>
</dbReference>
<dbReference type="FunFam" id="2.40.50.140:FF:000079">
    <property type="entry name" value="Exoribonuclease 2"/>
    <property type="match status" value="1"/>
</dbReference>
<dbReference type="FunFam" id="2.40.50.140:FF:000081">
    <property type="entry name" value="Exoribonuclease 2"/>
    <property type="match status" value="1"/>
</dbReference>
<dbReference type="FunFam" id="2.40.50.640:FF:000001">
    <property type="entry name" value="Exoribonuclease 2"/>
    <property type="match status" value="1"/>
</dbReference>
<dbReference type="Gene3D" id="2.40.50.640">
    <property type="match status" value="1"/>
</dbReference>
<dbReference type="Gene3D" id="2.40.50.140">
    <property type="entry name" value="Nucleic acid-binding proteins"/>
    <property type="match status" value="2"/>
</dbReference>
<dbReference type="HAMAP" id="MF_01036">
    <property type="entry name" value="RNase_II"/>
    <property type="match status" value="1"/>
</dbReference>
<dbReference type="InterPro" id="IPR011129">
    <property type="entry name" value="CSD"/>
</dbReference>
<dbReference type="InterPro" id="IPR012340">
    <property type="entry name" value="NA-bd_OB-fold"/>
</dbReference>
<dbReference type="InterPro" id="IPR013223">
    <property type="entry name" value="RNase_B_OB_dom"/>
</dbReference>
<dbReference type="InterPro" id="IPR011804">
    <property type="entry name" value="RNase_II"/>
</dbReference>
<dbReference type="InterPro" id="IPR001900">
    <property type="entry name" value="RNase_II/R"/>
</dbReference>
<dbReference type="InterPro" id="IPR022966">
    <property type="entry name" value="RNase_II/R_CS"/>
</dbReference>
<dbReference type="InterPro" id="IPR004476">
    <property type="entry name" value="RNase_II/RNase_R"/>
</dbReference>
<dbReference type="InterPro" id="IPR050180">
    <property type="entry name" value="RNR_Ribonuclease"/>
</dbReference>
<dbReference type="InterPro" id="IPR003029">
    <property type="entry name" value="S1_domain"/>
</dbReference>
<dbReference type="NCBIfam" id="TIGR00358">
    <property type="entry name" value="3_prime_RNase"/>
    <property type="match status" value="1"/>
</dbReference>
<dbReference type="NCBIfam" id="NF003455">
    <property type="entry name" value="PRK05054.1"/>
    <property type="match status" value="1"/>
</dbReference>
<dbReference type="NCBIfam" id="TIGR02062">
    <property type="entry name" value="RNase_B"/>
    <property type="match status" value="1"/>
</dbReference>
<dbReference type="PANTHER" id="PTHR23355:SF37">
    <property type="entry name" value="EXORIBONUCLEASE 2"/>
    <property type="match status" value="1"/>
</dbReference>
<dbReference type="PANTHER" id="PTHR23355">
    <property type="entry name" value="RIBONUCLEASE"/>
    <property type="match status" value="1"/>
</dbReference>
<dbReference type="Pfam" id="PF08206">
    <property type="entry name" value="OB_RNB"/>
    <property type="match status" value="1"/>
</dbReference>
<dbReference type="Pfam" id="PF00773">
    <property type="entry name" value="RNB"/>
    <property type="match status" value="1"/>
</dbReference>
<dbReference type="Pfam" id="PF00575">
    <property type="entry name" value="S1"/>
    <property type="match status" value="1"/>
</dbReference>
<dbReference type="SMART" id="SM00357">
    <property type="entry name" value="CSP"/>
    <property type="match status" value="1"/>
</dbReference>
<dbReference type="SMART" id="SM00955">
    <property type="entry name" value="RNB"/>
    <property type="match status" value="1"/>
</dbReference>
<dbReference type="SUPFAM" id="SSF50249">
    <property type="entry name" value="Nucleic acid-binding proteins"/>
    <property type="match status" value="4"/>
</dbReference>
<dbReference type="PROSITE" id="PS01175">
    <property type="entry name" value="RIBONUCLEASE_II"/>
    <property type="match status" value="1"/>
</dbReference>
<sequence>MFQDNPLLAQLKQQLHSQTPRAEGVVKATEKGFGFLEVDAQKSYFIPPPQMKKVMHGDRIIAVIHSEKERESAEPEELVEPFLTRFVGKVQGKNDRLAIVPDHPLLKDAIPCRAARGLNHEFKEGDWAVAEMRRHPLKGDRSFYAELTQYITFGDDHFVPWWVTLARHNLEKEAPDGVATEMLDEGLVREDLTALDFVTIDSASTEDMDDALFAKALPDDKLQLIVAIADPTAWIAEGSKLDKAAKIRAFTNYLPGFNIPMLPRELSDDLCSLRANEVRPVLACRMTLSADGTIEDNIEFFAATIESKAKLVYDQVSDWLENTGDWQPESEAIAEQVRLLAQICQRRGEWRHNHALVFKDRPDYRFILGEKGEVLDIVAEPRRIANRIVEEAMIAANICAARVLRDKLGFGIYNVHMGFDPANADALAALLKTHGLHVDAEEVLTLDGFCKLRRELDAQPTGFLDSRIRRFQSFAEISTEPGPHFGLGLEAYATWTSPIRKYGDMINHRLLKAVIKGETATRPQDEITVQMAERRRLNRMAERDVGDWLYARFLKDKAGTDTRFAAEIVDISRGGMRVRLVDNGAIAFIPAPFLHAVRDELVCSQENGTVQIKGETAYKVTDVIDVTIAEVRMETRSIIARPVA</sequence>
<proteinExistence type="inferred from homology"/>
<feature type="chain" id="PRO_1000135868" description="Exoribonuclease 2">
    <location>
        <begin position="1"/>
        <end position="644"/>
    </location>
</feature>
<feature type="domain" description="RNB" evidence="1">
    <location>
        <begin position="189"/>
        <end position="516"/>
    </location>
</feature>
<feature type="domain" description="S1 motif" evidence="2">
    <location>
        <begin position="561"/>
        <end position="643"/>
    </location>
</feature>
<accession>B1LGE7</accession>
<reference key="1">
    <citation type="journal article" date="2008" name="J. Bacteriol.">
        <title>Insights into the environmental resistance gene pool from the genome sequence of the multidrug-resistant environmental isolate Escherichia coli SMS-3-5.</title>
        <authorList>
            <person name="Fricke W.F."/>
            <person name="Wright M.S."/>
            <person name="Lindell A.H."/>
            <person name="Harkins D.M."/>
            <person name="Baker-Austin C."/>
            <person name="Ravel J."/>
            <person name="Stepanauskas R."/>
        </authorList>
    </citation>
    <scope>NUCLEOTIDE SEQUENCE [LARGE SCALE GENOMIC DNA]</scope>
    <source>
        <strain>SMS-3-5 / SECEC</strain>
    </source>
</reference>